<sequence length="178" mass="18718">MFDIGWSELVVIAVVALIAIGPKELPGVLRMVGQWMGKARRMAAEFQGQFNEAMREADMAELKKSFDEVRDATSGLTSGNLMTKLTDSLGEPPKLEDLDKPAANRPAADMSAASANDVPASGSIAPEAAIPKTGTEADAKALASEPLAITPEFQHATPEPAPATHETPHEAVKDAKAS</sequence>
<dbReference type="EMBL" id="CP000319">
    <property type="protein sequence ID" value="ABE62603.1"/>
    <property type="molecule type" value="Genomic_DNA"/>
</dbReference>
<dbReference type="RefSeq" id="WP_011510285.1">
    <property type="nucleotide sequence ID" value="NC_007964.1"/>
</dbReference>
<dbReference type="SMR" id="Q1QME4"/>
<dbReference type="STRING" id="323097.Nham_1789"/>
<dbReference type="KEGG" id="nha:Nham_1789"/>
<dbReference type="eggNOG" id="COG1826">
    <property type="taxonomic scope" value="Bacteria"/>
</dbReference>
<dbReference type="HOGENOM" id="CLU_086034_1_3_5"/>
<dbReference type="OrthoDB" id="7206969at2"/>
<dbReference type="Proteomes" id="UP000001953">
    <property type="component" value="Chromosome"/>
</dbReference>
<dbReference type="GO" id="GO:0033281">
    <property type="term" value="C:TAT protein transport complex"/>
    <property type="evidence" value="ECO:0007669"/>
    <property type="project" value="UniProtKB-UniRule"/>
</dbReference>
<dbReference type="GO" id="GO:0008320">
    <property type="term" value="F:protein transmembrane transporter activity"/>
    <property type="evidence" value="ECO:0007669"/>
    <property type="project" value="UniProtKB-UniRule"/>
</dbReference>
<dbReference type="GO" id="GO:0043953">
    <property type="term" value="P:protein transport by the Tat complex"/>
    <property type="evidence" value="ECO:0007669"/>
    <property type="project" value="UniProtKB-UniRule"/>
</dbReference>
<dbReference type="Gene3D" id="1.20.5.3310">
    <property type="match status" value="1"/>
</dbReference>
<dbReference type="HAMAP" id="MF_00237">
    <property type="entry name" value="TatB"/>
    <property type="match status" value="1"/>
</dbReference>
<dbReference type="InterPro" id="IPR003369">
    <property type="entry name" value="TatA/B/E"/>
</dbReference>
<dbReference type="InterPro" id="IPR018448">
    <property type="entry name" value="TatB"/>
</dbReference>
<dbReference type="NCBIfam" id="TIGR01410">
    <property type="entry name" value="tatB"/>
    <property type="match status" value="1"/>
</dbReference>
<dbReference type="PANTHER" id="PTHR33162">
    <property type="entry name" value="SEC-INDEPENDENT PROTEIN TRANSLOCASE PROTEIN TATA, CHLOROPLASTIC"/>
    <property type="match status" value="1"/>
</dbReference>
<dbReference type="PANTHER" id="PTHR33162:SF1">
    <property type="entry name" value="SEC-INDEPENDENT PROTEIN TRANSLOCASE PROTEIN TATA, CHLOROPLASTIC"/>
    <property type="match status" value="1"/>
</dbReference>
<dbReference type="Pfam" id="PF02416">
    <property type="entry name" value="TatA_B_E"/>
    <property type="match status" value="1"/>
</dbReference>
<dbReference type="PRINTS" id="PR01506">
    <property type="entry name" value="TATBPROTEIN"/>
</dbReference>
<gene>
    <name evidence="1" type="primary">tatB</name>
    <name type="ordered locus">Nham_1789</name>
</gene>
<organism>
    <name type="scientific">Nitrobacter hamburgensis (strain DSM 10229 / NCIMB 13809 / X14)</name>
    <dbReference type="NCBI Taxonomy" id="323097"/>
    <lineage>
        <taxon>Bacteria</taxon>
        <taxon>Pseudomonadati</taxon>
        <taxon>Pseudomonadota</taxon>
        <taxon>Alphaproteobacteria</taxon>
        <taxon>Hyphomicrobiales</taxon>
        <taxon>Nitrobacteraceae</taxon>
        <taxon>Nitrobacter</taxon>
    </lineage>
</organism>
<name>TATB_NITHX</name>
<proteinExistence type="inferred from homology"/>
<keyword id="KW-0997">Cell inner membrane</keyword>
<keyword id="KW-1003">Cell membrane</keyword>
<keyword id="KW-0472">Membrane</keyword>
<keyword id="KW-0653">Protein transport</keyword>
<keyword id="KW-1185">Reference proteome</keyword>
<keyword id="KW-0811">Translocation</keyword>
<keyword id="KW-0812">Transmembrane</keyword>
<keyword id="KW-1133">Transmembrane helix</keyword>
<keyword id="KW-0813">Transport</keyword>
<accession>Q1QME4</accession>
<evidence type="ECO:0000255" key="1">
    <source>
        <dbReference type="HAMAP-Rule" id="MF_00237"/>
    </source>
</evidence>
<evidence type="ECO:0000256" key="2">
    <source>
        <dbReference type="SAM" id="MobiDB-lite"/>
    </source>
</evidence>
<feature type="chain" id="PRO_0000301197" description="Sec-independent protein translocase protein TatB">
    <location>
        <begin position="1"/>
        <end position="178"/>
    </location>
</feature>
<feature type="transmembrane region" description="Helical" evidence="1">
    <location>
        <begin position="1"/>
        <end position="21"/>
    </location>
</feature>
<feature type="region of interest" description="Disordered" evidence="2">
    <location>
        <begin position="77"/>
        <end position="178"/>
    </location>
</feature>
<feature type="compositionally biased region" description="Polar residues" evidence="2">
    <location>
        <begin position="77"/>
        <end position="86"/>
    </location>
</feature>
<feature type="compositionally biased region" description="Basic and acidic residues" evidence="2">
    <location>
        <begin position="93"/>
        <end position="102"/>
    </location>
</feature>
<feature type="compositionally biased region" description="Low complexity" evidence="2">
    <location>
        <begin position="155"/>
        <end position="165"/>
    </location>
</feature>
<feature type="compositionally biased region" description="Basic and acidic residues" evidence="2">
    <location>
        <begin position="166"/>
        <end position="178"/>
    </location>
</feature>
<reference key="1">
    <citation type="submission" date="2006-03" db="EMBL/GenBank/DDBJ databases">
        <title>Complete sequence of chromosome of Nitrobacter hamburgensis X14.</title>
        <authorList>
            <consortium name="US DOE Joint Genome Institute"/>
            <person name="Copeland A."/>
            <person name="Lucas S."/>
            <person name="Lapidus A."/>
            <person name="Barry K."/>
            <person name="Detter J.C."/>
            <person name="Glavina del Rio T."/>
            <person name="Hammon N."/>
            <person name="Israni S."/>
            <person name="Dalin E."/>
            <person name="Tice H."/>
            <person name="Pitluck S."/>
            <person name="Chain P."/>
            <person name="Malfatti S."/>
            <person name="Shin M."/>
            <person name="Vergez L."/>
            <person name="Schmutz J."/>
            <person name="Larimer F."/>
            <person name="Land M."/>
            <person name="Hauser L."/>
            <person name="Kyrpides N."/>
            <person name="Ivanova N."/>
            <person name="Ward B."/>
            <person name="Arp D."/>
            <person name="Klotz M."/>
            <person name="Stein L."/>
            <person name="O'Mullan G."/>
            <person name="Starkenburg S."/>
            <person name="Sayavedra L."/>
            <person name="Poret-Peterson A.T."/>
            <person name="Gentry M.E."/>
            <person name="Bruce D."/>
            <person name="Richardson P."/>
        </authorList>
    </citation>
    <scope>NUCLEOTIDE SEQUENCE [LARGE SCALE GENOMIC DNA]</scope>
    <source>
        <strain>DSM 10229 / NCIMB 13809 / X14</strain>
    </source>
</reference>
<comment type="function">
    <text evidence="1">Part of the twin-arginine translocation (Tat) system that transports large folded proteins containing a characteristic twin-arginine motif in their signal peptide across membranes. Together with TatC, TatB is part of a receptor directly interacting with Tat signal peptides. TatB may form an oligomeric binding site that transiently accommodates folded Tat precursor proteins before their translocation.</text>
</comment>
<comment type="subunit">
    <text evidence="1">The Tat system comprises two distinct complexes: a TatABC complex, containing multiple copies of TatA, TatB and TatC subunits, and a separate TatA complex, containing only TatA subunits. Substrates initially bind to the TatABC complex, which probably triggers association of the separate TatA complex to form the active translocon.</text>
</comment>
<comment type="subcellular location">
    <subcellularLocation>
        <location evidence="1">Cell inner membrane</location>
        <topology evidence="1">Single-pass membrane protein</topology>
    </subcellularLocation>
</comment>
<comment type="similarity">
    <text evidence="1">Belongs to the TatB family.</text>
</comment>
<protein>
    <recommendedName>
        <fullName evidence="1">Sec-independent protein translocase protein TatB</fullName>
    </recommendedName>
</protein>